<name>RL30_COXBU</name>
<keyword id="KW-1185">Reference proteome</keyword>
<keyword id="KW-0687">Ribonucleoprotein</keyword>
<keyword id="KW-0689">Ribosomal protein</keyword>
<gene>
    <name evidence="1" type="primary">rpmD</name>
    <name type="ordered locus">CBU_0256</name>
</gene>
<reference key="1">
    <citation type="journal article" date="2003" name="Proc. Natl. Acad. Sci. U.S.A.">
        <title>Complete genome sequence of the Q-fever pathogen, Coxiella burnetii.</title>
        <authorList>
            <person name="Seshadri R."/>
            <person name="Paulsen I.T."/>
            <person name="Eisen J.A."/>
            <person name="Read T.D."/>
            <person name="Nelson K.E."/>
            <person name="Nelson W.C."/>
            <person name="Ward N.L."/>
            <person name="Tettelin H."/>
            <person name="Davidsen T.M."/>
            <person name="Beanan M.J."/>
            <person name="DeBoy R.T."/>
            <person name="Daugherty S.C."/>
            <person name="Brinkac L.M."/>
            <person name="Madupu R."/>
            <person name="Dodson R.J."/>
            <person name="Khouri H.M."/>
            <person name="Lee K.H."/>
            <person name="Carty H.A."/>
            <person name="Scanlan D."/>
            <person name="Heinzen R.A."/>
            <person name="Thompson H.A."/>
            <person name="Samuel J.E."/>
            <person name="Fraser C.M."/>
            <person name="Heidelberg J.F."/>
        </authorList>
    </citation>
    <scope>NUCLEOTIDE SEQUENCE [LARGE SCALE GENOMIC DNA]</scope>
    <source>
        <strain>RSA 493 / Nine Mile phase I</strain>
    </source>
</reference>
<sequence>MVQEKKLRVTLVKSKYGRKPGHRECIEGLGLRRMHQTVEVTDTPANRGMIEKVSYLLMIDEEV</sequence>
<proteinExistence type="inferred from homology"/>
<accession>Q83EQ8</accession>
<feature type="chain" id="PRO_0000273777" description="Large ribosomal subunit protein uL30">
    <location>
        <begin position="1"/>
        <end position="63"/>
    </location>
</feature>
<protein>
    <recommendedName>
        <fullName evidence="1">Large ribosomal subunit protein uL30</fullName>
    </recommendedName>
    <alternativeName>
        <fullName evidence="2">50S ribosomal protein L30</fullName>
    </alternativeName>
</protein>
<evidence type="ECO:0000255" key="1">
    <source>
        <dbReference type="HAMAP-Rule" id="MF_01371"/>
    </source>
</evidence>
<evidence type="ECO:0000305" key="2"/>
<comment type="subunit">
    <text evidence="1">Part of the 50S ribosomal subunit.</text>
</comment>
<comment type="similarity">
    <text evidence="1">Belongs to the universal ribosomal protein uL30 family.</text>
</comment>
<organism>
    <name type="scientific">Coxiella burnetii (strain RSA 493 / Nine Mile phase I)</name>
    <dbReference type="NCBI Taxonomy" id="227377"/>
    <lineage>
        <taxon>Bacteria</taxon>
        <taxon>Pseudomonadati</taxon>
        <taxon>Pseudomonadota</taxon>
        <taxon>Gammaproteobacteria</taxon>
        <taxon>Legionellales</taxon>
        <taxon>Coxiellaceae</taxon>
        <taxon>Coxiella</taxon>
    </lineage>
</organism>
<dbReference type="EMBL" id="AE016828">
    <property type="protein sequence ID" value="AAO89814.1"/>
    <property type="molecule type" value="Genomic_DNA"/>
</dbReference>
<dbReference type="RefSeq" id="NP_819300.1">
    <property type="nucleotide sequence ID" value="NC_002971.3"/>
</dbReference>
<dbReference type="RefSeq" id="WP_005771513.1">
    <property type="nucleotide sequence ID" value="NZ_CDBG01000001.1"/>
</dbReference>
<dbReference type="SMR" id="Q83EQ8"/>
<dbReference type="STRING" id="227377.CBU_0256"/>
<dbReference type="DNASU" id="1208137"/>
<dbReference type="EnsemblBacteria" id="AAO89814">
    <property type="protein sequence ID" value="AAO89814"/>
    <property type="gene ID" value="CBU_0256"/>
</dbReference>
<dbReference type="GeneID" id="1208137"/>
<dbReference type="KEGG" id="cbu:CBU_0256"/>
<dbReference type="PATRIC" id="fig|227377.7.peg.251"/>
<dbReference type="eggNOG" id="COG1841">
    <property type="taxonomic scope" value="Bacteria"/>
</dbReference>
<dbReference type="HOGENOM" id="CLU_131047_1_4_6"/>
<dbReference type="OrthoDB" id="9812790at2"/>
<dbReference type="Proteomes" id="UP000002671">
    <property type="component" value="Chromosome"/>
</dbReference>
<dbReference type="GO" id="GO:0022625">
    <property type="term" value="C:cytosolic large ribosomal subunit"/>
    <property type="evidence" value="ECO:0000318"/>
    <property type="project" value="GO_Central"/>
</dbReference>
<dbReference type="GO" id="GO:0003735">
    <property type="term" value="F:structural constituent of ribosome"/>
    <property type="evidence" value="ECO:0007669"/>
    <property type="project" value="InterPro"/>
</dbReference>
<dbReference type="GO" id="GO:0006412">
    <property type="term" value="P:translation"/>
    <property type="evidence" value="ECO:0007669"/>
    <property type="project" value="UniProtKB-UniRule"/>
</dbReference>
<dbReference type="CDD" id="cd01658">
    <property type="entry name" value="Ribosomal_L30"/>
    <property type="match status" value="1"/>
</dbReference>
<dbReference type="FunFam" id="3.30.1390.20:FF:000001">
    <property type="entry name" value="50S ribosomal protein L30"/>
    <property type="match status" value="1"/>
</dbReference>
<dbReference type="Gene3D" id="3.30.1390.20">
    <property type="entry name" value="Ribosomal protein L30, ferredoxin-like fold domain"/>
    <property type="match status" value="1"/>
</dbReference>
<dbReference type="HAMAP" id="MF_01371_B">
    <property type="entry name" value="Ribosomal_uL30_B"/>
    <property type="match status" value="1"/>
</dbReference>
<dbReference type="InterPro" id="IPR036919">
    <property type="entry name" value="Ribo_uL30_ferredoxin-like_sf"/>
</dbReference>
<dbReference type="InterPro" id="IPR005996">
    <property type="entry name" value="Ribosomal_uL30_bac-type"/>
</dbReference>
<dbReference type="InterPro" id="IPR016082">
    <property type="entry name" value="Ribosomal_uL30_ferredoxin-like"/>
</dbReference>
<dbReference type="NCBIfam" id="TIGR01308">
    <property type="entry name" value="rpmD_bact"/>
    <property type="match status" value="1"/>
</dbReference>
<dbReference type="PANTHER" id="PTHR15892:SF2">
    <property type="entry name" value="LARGE RIBOSOMAL SUBUNIT PROTEIN UL30M"/>
    <property type="match status" value="1"/>
</dbReference>
<dbReference type="PANTHER" id="PTHR15892">
    <property type="entry name" value="MITOCHONDRIAL RIBOSOMAL PROTEIN L30"/>
    <property type="match status" value="1"/>
</dbReference>
<dbReference type="Pfam" id="PF00327">
    <property type="entry name" value="Ribosomal_L30"/>
    <property type="match status" value="1"/>
</dbReference>
<dbReference type="PIRSF" id="PIRSF002211">
    <property type="entry name" value="Ribosomal_L30_bac-type"/>
    <property type="match status" value="1"/>
</dbReference>
<dbReference type="SUPFAM" id="SSF55129">
    <property type="entry name" value="Ribosomal protein L30p/L7e"/>
    <property type="match status" value="1"/>
</dbReference>